<comment type="similarity">
    <text evidence="1">Belongs to the UPF0358 family.</text>
</comment>
<keyword id="KW-1185">Reference proteome</keyword>
<gene>
    <name type="ordered locus">BH2626</name>
</gene>
<reference key="1">
    <citation type="journal article" date="2000" name="Nucleic Acids Res.">
        <title>Complete genome sequence of the alkaliphilic bacterium Bacillus halodurans and genomic sequence comparison with Bacillus subtilis.</title>
        <authorList>
            <person name="Takami H."/>
            <person name="Nakasone K."/>
            <person name="Takaki Y."/>
            <person name="Maeno G."/>
            <person name="Sasaki R."/>
            <person name="Masui N."/>
            <person name="Fuji F."/>
            <person name="Hirama C."/>
            <person name="Nakamura Y."/>
            <person name="Ogasawara N."/>
            <person name="Kuhara S."/>
            <person name="Horikoshi K."/>
        </authorList>
    </citation>
    <scope>NUCLEOTIDE SEQUENCE [LARGE SCALE GENOMIC DNA]</scope>
    <source>
        <strain>ATCC BAA-125 / DSM 18197 / FERM 7344 / JCM 9153 / C-125</strain>
    </source>
</reference>
<dbReference type="EMBL" id="BA000004">
    <property type="protein sequence ID" value="BAB06345.1"/>
    <property type="molecule type" value="Genomic_DNA"/>
</dbReference>
<dbReference type="PIR" id="B83978">
    <property type="entry name" value="B83978"/>
</dbReference>
<dbReference type="RefSeq" id="WP_010898777.1">
    <property type="nucleotide sequence ID" value="NC_002570.2"/>
</dbReference>
<dbReference type="SMR" id="Q9K9L9"/>
<dbReference type="STRING" id="272558.gene:10728524"/>
<dbReference type="GeneID" id="87598137"/>
<dbReference type="KEGG" id="bha:BH2626"/>
<dbReference type="eggNOG" id="COG4838">
    <property type="taxonomic scope" value="Bacteria"/>
</dbReference>
<dbReference type="HOGENOM" id="CLU_160493_1_0_9"/>
<dbReference type="OrthoDB" id="2135235at2"/>
<dbReference type="Proteomes" id="UP000001258">
    <property type="component" value="Chromosome"/>
</dbReference>
<dbReference type="Gene3D" id="1.10.287.750">
    <property type="entry name" value="SO2669-like"/>
    <property type="match status" value="1"/>
</dbReference>
<dbReference type="HAMAP" id="MF_01560">
    <property type="entry name" value="UPF0358"/>
    <property type="match status" value="1"/>
</dbReference>
<dbReference type="InterPro" id="IPR009983">
    <property type="entry name" value="UPF0358"/>
</dbReference>
<dbReference type="InterPro" id="IPR036270">
    <property type="entry name" value="UPF0358_sf"/>
</dbReference>
<dbReference type="NCBIfam" id="NF010187">
    <property type="entry name" value="PRK13666.1"/>
    <property type="match status" value="1"/>
</dbReference>
<dbReference type="Pfam" id="PF07408">
    <property type="entry name" value="DUF1507"/>
    <property type="match status" value="1"/>
</dbReference>
<dbReference type="SUPFAM" id="SSF140404">
    <property type="entry name" value="EF2458-like"/>
    <property type="match status" value="1"/>
</dbReference>
<organism>
    <name type="scientific">Halalkalibacterium halodurans (strain ATCC BAA-125 / DSM 18197 / FERM 7344 / JCM 9153 / C-125)</name>
    <name type="common">Bacillus halodurans</name>
    <dbReference type="NCBI Taxonomy" id="272558"/>
    <lineage>
        <taxon>Bacteria</taxon>
        <taxon>Bacillati</taxon>
        <taxon>Bacillota</taxon>
        <taxon>Bacilli</taxon>
        <taxon>Bacillales</taxon>
        <taxon>Bacillaceae</taxon>
        <taxon>Halalkalibacterium (ex Joshi et al. 2022)</taxon>
    </lineage>
</organism>
<sequence length="93" mass="10716">MSAETVTGHNEKAYALLKSDAEKIRKLIEVQLENLTMPQCPLYEEVLDTQMFGLSREIDFAIRLELIDEEQGKQLLSELERKLADLHEATVRK</sequence>
<name>Y2626_HALH5</name>
<feature type="chain" id="PRO_0000110640" description="UPF0358 protein BH2626">
    <location>
        <begin position="1"/>
        <end position="93"/>
    </location>
</feature>
<protein>
    <recommendedName>
        <fullName evidence="1">UPF0358 protein BH2626</fullName>
    </recommendedName>
</protein>
<evidence type="ECO:0000255" key="1">
    <source>
        <dbReference type="HAMAP-Rule" id="MF_01560"/>
    </source>
</evidence>
<proteinExistence type="inferred from homology"/>
<accession>Q9K9L9</accession>